<reference key="1">
    <citation type="journal article" date="2005" name="Genome Res.">
        <title>Coping with cold: the genome of the versatile marine Antarctica bacterium Pseudoalteromonas haloplanktis TAC125.</title>
        <authorList>
            <person name="Medigue C."/>
            <person name="Krin E."/>
            <person name="Pascal G."/>
            <person name="Barbe V."/>
            <person name="Bernsel A."/>
            <person name="Bertin P.N."/>
            <person name="Cheung F."/>
            <person name="Cruveiller S."/>
            <person name="D'Amico S."/>
            <person name="Duilio A."/>
            <person name="Fang G."/>
            <person name="Feller G."/>
            <person name="Ho C."/>
            <person name="Mangenot S."/>
            <person name="Marino G."/>
            <person name="Nilsson J."/>
            <person name="Parrilli E."/>
            <person name="Rocha E.P.C."/>
            <person name="Rouy Z."/>
            <person name="Sekowska A."/>
            <person name="Tutino M.L."/>
            <person name="Vallenet D."/>
            <person name="von Heijne G."/>
            <person name="Danchin A."/>
        </authorList>
    </citation>
    <scope>NUCLEOTIDE SEQUENCE [LARGE SCALE GENOMIC DNA]</scope>
    <source>
        <strain>TAC 125</strain>
    </source>
</reference>
<gene>
    <name evidence="1" type="primary">tpiA</name>
    <name type="ordered locus">PSHAa0873</name>
</gene>
<protein>
    <recommendedName>
        <fullName evidence="1">Triosephosphate isomerase</fullName>
        <shortName evidence="1">TIM</shortName>
        <shortName evidence="1">TPI</shortName>
        <ecNumber evidence="1">5.3.1.1</ecNumber>
    </recommendedName>
    <alternativeName>
        <fullName evidence="1">Triose-phosphate isomerase</fullName>
    </alternativeName>
</protein>
<comment type="function">
    <text evidence="1">Involved in the gluconeogenesis. Catalyzes stereospecifically the conversion of dihydroxyacetone phosphate (DHAP) to D-glyceraldehyde-3-phosphate (G3P).</text>
</comment>
<comment type="catalytic activity">
    <reaction evidence="1">
        <text>D-glyceraldehyde 3-phosphate = dihydroxyacetone phosphate</text>
        <dbReference type="Rhea" id="RHEA:18585"/>
        <dbReference type="ChEBI" id="CHEBI:57642"/>
        <dbReference type="ChEBI" id="CHEBI:59776"/>
        <dbReference type="EC" id="5.3.1.1"/>
    </reaction>
</comment>
<comment type="pathway">
    <text evidence="1">Carbohydrate biosynthesis; gluconeogenesis.</text>
</comment>
<comment type="pathway">
    <text evidence="1">Carbohydrate degradation; glycolysis; D-glyceraldehyde 3-phosphate from glycerone phosphate: step 1/1.</text>
</comment>
<comment type="subunit">
    <text evidence="1">Homodimer.</text>
</comment>
<comment type="subcellular location">
    <subcellularLocation>
        <location evidence="1">Cytoplasm</location>
    </subcellularLocation>
</comment>
<comment type="similarity">
    <text evidence="1">Belongs to the triosephosphate isomerase family.</text>
</comment>
<organism>
    <name type="scientific">Pseudoalteromonas translucida (strain TAC 125)</name>
    <dbReference type="NCBI Taxonomy" id="326442"/>
    <lineage>
        <taxon>Bacteria</taxon>
        <taxon>Pseudomonadati</taxon>
        <taxon>Pseudomonadota</taxon>
        <taxon>Gammaproteobacteria</taxon>
        <taxon>Alteromonadales</taxon>
        <taxon>Pseudoalteromonadaceae</taxon>
        <taxon>Pseudoalteromonas</taxon>
    </lineage>
</organism>
<keyword id="KW-0963">Cytoplasm</keyword>
<keyword id="KW-0312">Gluconeogenesis</keyword>
<keyword id="KW-0324">Glycolysis</keyword>
<keyword id="KW-0413">Isomerase</keyword>
<keyword id="KW-1185">Reference proteome</keyword>
<sequence>MAARKAMVAGNWKMNGSLELVKQMSDAINNVKSNEIDIVLFPPFPLVSAMIASGVSTGTQTVSENTPGAFTGEVDAQLIKELGAQYVLVGHSERRSIYKESNDVVAAKFARAQQVGLTPILCVGESESEQENGKTEQIVAAQIDAVIEKLGVAALKDSVIAYEPVWAIGTGKTASPEQAQSVHKFIRDKIASLNSDLAQGLTILYGGSVNEKNSELLFAQTDIDGGLIGGASLKADSFTAICNSAKGTV</sequence>
<feature type="chain" id="PRO_0000307532" description="Triosephosphate isomerase">
    <location>
        <begin position="1"/>
        <end position="249"/>
    </location>
</feature>
<feature type="active site" description="Electrophile" evidence="1">
    <location>
        <position position="91"/>
    </location>
</feature>
<feature type="active site" description="Proton acceptor" evidence="1">
    <location>
        <position position="163"/>
    </location>
</feature>
<feature type="binding site" evidence="1">
    <location>
        <begin position="11"/>
        <end position="13"/>
    </location>
    <ligand>
        <name>substrate</name>
    </ligand>
</feature>
<feature type="binding site" evidence="1">
    <location>
        <position position="169"/>
    </location>
    <ligand>
        <name>substrate</name>
    </ligand>
</feature>
<feature type="binding site" evidence="1">
    <location>
        <position position="208"/>
    </location>
    <ligand>
        <name>substrate</name>
    </ligand>
</feature>
<feature type="binding site" evidence="1">
    <location>
        <begin position="229"/>
        <end position="230"/>
    </location>
    <ligand>
        <name>substrate</name>
    </ligand>
</feature>
<proteinExistence type="inferred from homology"/>
<accession>Q3IE60</accession>
<name>TPIS_PSET1</name>
<evidence type="ECO:0000255" key="1">
    <source>
        <dbReference type="HAMAP-Rule" id="MF_00147"/>
    </source>
</evidence>
<dbReference type="EC" id="5.3.1.1" evidence="1"/>
<dbReference type="EMBL" id="CR954246">
    <property type="protein sequence ID" value="CAI85954.1"/>
    <property type="molecule type" value="Genomic_DNA"/>
</dbReference>
<dbReference type="SMR" id="Q3IE60"/>
<dbReference type="STRING" id="326442.PSHAa0873"/>
<dbReference type="KEGG" id="pha:PSHAa0873"/>
<dbReference type="PATRIC" id="fig|326442.8.peg.836"/>
<dbReference type="eggNOG" id="COG0149">
    <property type="taxonomic scope" value="Bacteria"/>
</dbReference>
<dbReference type="HOGENOM" id="CLU_024251_2_1_6"/>
<dbReference type="BioCyc" id="PHAL326442:PSHA_RS04260-MONOMER"/>
<dbReference type="UniPathway" id="UPA00109">
    <property type="reaction ID" value="UER00189"/>
</dbReference>
<dbReference type="UniPathway" id="UPA00138"/>
<dbReference type="Proteomes" id="UP000006843">
    <property type="component" value="Chromosome I"/>
</dbReference>
<dbReference type="GO" id="GO:0005829">
    <property type="term" value="C:cytosol"/>
    <property type="evidence" value="ECO:0007669"/>
    <property type="project" value="TreeGrafter"/>
</dbReference>
<dbReference type="GO" id="GO:0004807">
    <property type="term" value="F:triose-phosphate isomerase activity"/>
    <property type="evidence" value="ECO:0007669"/>
    <property type="project" value="UniProtKB-UniRule"/>
</dbReference>
<dbReference type="GO" id="GO:0006094">
    <property type="term" value="P:gluconeogenesis"/>
    <property type="evidence" value="ECO:0007669"/>
    <property type="project" value="UniProtKB-UniRule"/>
</dbReference>
<dbReference type="GO" id="GO:0046166">
    <property type="term" value="P:glyceraldehyde-3-phosphate biosynthetic process"/>
    <property type="evidence" value="ECO:0007669"/>
    <property type="project" value="TreeGrafter"/>
</dbReference>
<dbReference type="GO" id="GO:0019563">
    <property type="term" value="P:glycerol catabolic process"/>
    <property type="evidence" value="ECO:0007669"/>
    <property type="project" value="TreeGrafter"/>
</dbReference>
<dbReference type="GO" id="GO:0006096">
    <property type="term" value="P:glycolytic process"/>
    <property type="evidence" value="ECO:0007669"/>
    <property type="project" value="UniProtKB-UniRule"/>
</dbReference>
<dbReference type="CDD" id="cd00311">
    <property type="entry name" value="TIM"/>
    <property type="match status" value="1"/>
</dbReference>
<dbReference type="FunFam" id="3.20.20.70:FF:000020">
    <property type="entry name" value="Triosephosphate isomerase"/>
    <property type="match status" value="1"/>
</dbReference>
<dbReference type="Gene3D" id="3.20.20.70">
    <property type="entry name" value="Aldolase class I"/>
    <property type="match status" value="1"/>
</dbReference>
<dbReference type="HAMAP" id="MF_00147_B">
    <property type="entry name" value="TIM_B"/>
    <property type="match status" value="1"/>
</dbReference>
<dbReference type="InterPro" id="IPR013785">
    <property type="entry name" value="Aldolase_TIM"/>
</dbReference>
<dbReference type="InterPro" id="IPR035990">
    <property type="entry name" value="TIM_sf"/>
</dbReference>
<dbReference type="InterPro" id="IPR022896">
    <property type="entry name" value="TrioseP_Isoase_bac/euk"/>
</dbReference>
<dbReference type="InterPro" id="IPR000652">
    <property type="entry name" value="Triosephosphate_isomerase"/>
</dbReference>
<dbReference type="InterPro" id="IPR020861">
    <property type="entry name" value="Triosephosphate_isomerase_AS"/>
</dbReference>
<dbReference type="NCBIfam" id="TIGR00419">
    <property type="entry name" value="tim"/>
    <property type="match status" value="1"/>
</dbReference>
<dbReference type="PANTHER" id="PTHR21139">
    <property type="entry name" value="TRIOSEPHOSPHATE ISOMERASE"/>
    <property type="match status" value="1"/>
</dbReference>
<dbReference type="PANTHER" id="PTHR21139:SF42">
    <property type="entry name" value="TRIOSEPHOSPHATE ISOMERASE"/>
    <property type="match status" value="1"/>
</dbReference>
<dbReference type="Pfam" id="PF00121">
    <property type="entry name" value="TIM"/>
    <property type="match status" value="1"/>
</dbReference>
<dbReference type="SUPFAM" id="SSF51351">
    <property type="entry name" value="Triosephosphate isomerase (TIM)"/>
    <property type="match status" value="1"/>
</dbReference>
<dbReference type="PROSITE" id="PS00171">
    <property type="entry name" value="TIM_1"/>
    <property type="match status" value="1"/>
</dbReference>
<dbReference type="PROSITE" id="PS51440">
    <property type="entry name" value="TIM_2"/>
    <property type="match status" value="1"/>
</dbReference>